<proteinExistence type="inferred from homology"/>
<comment type="function">
    <text evidence="1">Is required not only for elongation of protein synthesis but also for the initiation of all mRNA translation through initiator tRNA(fMet) aminoacylation.</text>
</comment>
<comment type="catalytic activity">
    <reaction evidence="1">
        <text>tRNA(Met) + L-methionine + ATP = L-methionyl-tRNA(Met) + AMP + diphosphate</text>
        <dbReference type="Rhea" id="RHEA:13481"/>
        <dbReference type="Rhea" id="RHEA-COMP:9667"/>
        <dbReference type="Rhea" id="RHEA-COMP:9698"/>
        <dbReference type="ChEBI" id="CHEBI:30616"/>
        <dbReference type="ChEBI" id="CHEBI:33019"/>
        <dbReference type="ChEBI" id="CHEBI:57844"/>
        <dbReference type="ChEBI" id="CHEBI:78442"/>
        <dbReference type="ChEBI" id="CHEBI:78530"/>
        <dbReference type="ChEBI" id="CHEBI:456215"/>
        <dbReference type="EC" id="6.1.1.10"/>
    </reaction>
</comment>
<comment type="cofactor">
    <cofactor evidence="1">
        <name>Zn(2+)</name>
        <dbReference type="ChEBI" id="CHEBI:29105"/>
    </cofactor>
    <text evidence="1">Binds 1 zinc ion per subunit.</text>
</comment>
<comment type="subunit">
    <text evidence="1">Homodimer.</text>
</comment>
<comment type="subcellular location">
    <subcellularLocation>
        <location evidence="1">Cytoplasm</location>
    </subcellularLocation>
</comment>
<comment type="similarity">
    <text evidence="1">Belongs to the class-I aminoacyl-tRNA synthetase family. MetG type 1 subfamily.</text>
</comment>
<evidence type="ECO:0000255" key="1">
    <source>
        <dbReference type="HAMAP-Rule" id="MF_00098"/>
    </source>
</evidence>
<dbReference type="EC" id="6.1.1.10" evidence="1"/>
<dbReference type="EMBL" id="CP000529">
    <property type="protein sequence ID" value="ABM36137.1"/>
    <property type="molecule type" value="Genomic_DNA"/>
</dbReference>
<dbReference type="RefSeq" id="WP_011800232.1">
    <property type="nucleotide sequence ID" value="NC_008781.1"/>
</dbReference>
<dbReference type="SMR" id="A1VKF9"/>
<dbReference type="STRING" id="365044.Pnap_0818"/>
<dbReference type="KEGG" id="pna:Pnap_0818"/>
<dbReference type="eggNOG" id="COG0073">
    <property type="taxonomic scope" value="Bacteria"/>
</dbReference>
<dbReference type="eggNOG" id="COG0143">
    <property type="taxonomic scope" value="Bacteria"/>
</dbReference>
<dbReference type="HOGENOM" id="CLU_009710_7_0_4"/>
<dbReference type="OrthoDB" id="9810191at2"/>
<dbReference type="Proteomes" id="UP000000644">
    <property type="component" value="Chromosome"/>
</dbReference>
<dbReference type="GO" id="GO:0005829">
    <property type="term" value="C:cytosol"/>
    <property type="evidence" value="ECO:0007669"/>
    <property type="project" value="TreeGrafter"/>
</dbReference>
<dbReference type="GO" id="GO:0005524">
    <property type="term" value="F:ATP binding"/>
    <property type="evidence" value="ECO:0007669"/>
    <property type="project" value="UniProtKB-UniRule"/>
</dbReference>
<dbReference type="GO" id="GO:0046872">
    <property type="term" value="F:metal ion binding"/>
    <property type="evidence" value="ECO:0007669"/>
    <property type="project" value="UniProtKB-KW"/>
</dbReference>
<dbReference type="GO" id="GO:0004825">
    <property type="term" value="F:methionine-tRNA ligase activity"/>
    <property type="evidence" value="ECO:0007669"/>
    <property type="project" value="UniProtKB-UniRule"/>
</dbReference>
<dbReference type="GO" id="GO:0000049">
    <property type="term" value="F:tRNA binding"/>
    <property type="evidence" value="ECO:0007669"/>
    <property type="project" value="UniProtKB-KW"/>
</dbReference>
<dbReference type="GO" id="GO:0006431">
    <property type="term" value="P:methionyl-tRNA aminoacylation"/>
    <property type="evidence" value="ECO:0007669"/>
    <property type="project" value="UniProtKB-UniRule"/>
</dbReference>
<dbReference type="CDD" id="cd07957">
    <property type="entry name" value="Anticodon_Ia_Met"/>
    <property type="match status" value="1"/>
</dbReference>
<dbReference type="CDD" id="cd00814">
    <property type="entry name" value="MetRS_core"/>
    <property type="match status" value="1"/>
</dbReference>
<dbReference type="CDD" id="cd02800">
    <property type="entry name" value="tRNA_bind_EcMetRS_like"/>
    <property type="match status" value="1"/>
</dbReference>
<dbReference type="FunFam" id="2.20.28.20:FF:000001">
    <property type="entry name" value="Methionine--tRNA ligase"/>
    <property type="match status" value="1"/>
</dbReference>
<dbReference type="FunFam" id="2.40.50.140:FF:000042">
    <property type="entry name" value="Methionine--tRNA ligase"/>
    <property type="match status" value="1"/>
</dbReference>
<dbReference type="Gene3D" id="3.40.50.620">
    <property type="entry name" value="HUPs"/>
    <property type="match status" value="1"/>
</dbReference>
<dbReference type="Gene3D" id="1.10.730.10">
    <property type="entry name" value="Isoleucyl-tRNA Synthetase, Domain 1"/>
    <property type="match status" value="1"/>
</dbReference>
<dbReference type="Gene3D" id="2.20.28.20">
    <property type="entry name" value="Methionyl-tRNA synthetase, Zn-domain"/>
    <property type="match status" value="1"/>
</dbReference>
<dbReference type="Gene3D" id="2.40.50.140">
    <property type="entry name" value="Nucleic acid-binding proteins"/>
    <property type="match status" value="1"/>
</dbReference>
<dbReference type="HAMAP" id="MF_00098">
    <property type="entry name" value="Met_tRNA_synth_type1"/>
    <property type="match status" value="1"/>
</dbReference>
<dbReference type="InterPro" id="IPR001412">
    <property type="entry name" value="aa-tRNA-synth_I_CS"/>
</dbReference>
<dbReference type="InterPro" id="IPR041872">
    <property type="entry name" value="Anticodon_Met"/>
</dbReference>
<dbReference type="InterPro" id="IPR004495">
    <property type="entry name" value="Met-tRNA-synth_bsu_C"/>
</dbReference>
<dbReference type="InterPro" id="IPR023458">
    <property type="entry name" value="Met-tRNA_ligase_1"/>
</dbReference>
<dbReference type="InterPro" id="IPR014758">
    <property type="entry name" value="Met-tRNA_synth"/>
</dbReference>
<dbReference type="InterPro" id="IPR015413">
    <property type="entry name" value="Methionyl/Leucyl_tRNA_Synth"/>
</dbReference>
<dbReference type="InterPro" id="IPR033911">
    <property type="entry name" value="MetRS_core"/>
</dbReference>
<dbReference type="InterPro" id="IPR029038">
    <property type="entry name" value="MetRS_Zn"/>
</dbReference>
<dbReference type="InterPro" id="IPR012340">
    <property type="entry name" value="NA-bd_OB-fold"/>
</dbReference>
<dbReference type="InterPro" id="IPR014729">
    <property type="entry name" value="Rossmann-like_a/b/a_fold"/>
</dbReference>
<dbReference type="InterPro" id="IPR002547">
    <property type="entry name" value="tRNA-bd_dom"/>
</dbReference>
<dbReference type="InterPro" id="IPR009080">
    <property type="entry name" value="tRNAsynth_Ia_anticodon-bd"/>
</dbReference>
<dbReference type="NCBIfam" id="TIGR00398">
    <property type="entry name" value="metG"/>
    <property type="match status" value="1"/>
</dbReference>
<dbReference type="NCBIfam" id="TIGR00399">
    <property type="entry name" value="metG_C_term"/>
    <property type="match status" value="1"/>
</dbReference>
<dbReference type="NCBIfam" id="NF001100">
    <property type="entry name" value="PRK00133.1"/>
    <property type="match status" value="1"/>
</dbReference>
<dbReference type="PANTHER" id="PTHR45765">
    <property type="entry name" value="METHIONINE--TRNA LIGASE"/>
    <property type="match status" value="1"/>
</dbReference>
<dbReference type="PANTHER" id="PTHR45765:SF1">
    <property type="entry name" value="METHIONINE--TRNA LIGASE, CYTOPLASMIC"/>
    <property type="match status" value="1"/>
</dbReference>
<dbReference type="Pfam" id="PF09334">
    <property type="entry name" value="tRNA-synt_1g"/>
    <property type="match status" value="1"/>
</dbReference>
<dbReference type="Pfam" id="PF01588">
    <property type="entry name" value="tRNA_bind"/>
    <property type="match status" value="1"/>
</dbReference>
<dbReference type="PRINTS" id="PR01041">
    <property type="entry name" value="TRNASYNTHMET"/>
</dbReference>
<dbReference type="SUPFAM" id="SSF47323">
    <property type="entry name" value="Anticodon-binding domain of a subclass of class I aminoacyl-tRNA synthetases"/>
    <property type="match status" value="1"/>
</dbReference>
<dbReference type="SUPFAM" id="SSF57770">
    <property type="entry name" value="Methionyl-tRNA synthetase (MetRS), Zn-domain"/>
    <property type="match status" value="1"/>
</dbReference>
<dbReference type="SUPFAM" id="SSF50249">
    <property type="entry name" value="Nucleic acid-binding proteins"/>
    <property type="match status" value="1"/>
</dbReference>
<dbReference type="SUPFAM" id="SSF52374">
    <property type="entry name" value="Nucleotidylyl transferase"/>
    <property type="match status" value="1"/>
</dbReference>
<dbReference type="PROSITE" id="PS00178">
    <property type="entry name" value="AA_TRNA_LIGASE_I"/>
    <property type="match status" value="1"/>
</dbReference>
<dbReference type="PROSITE" id="PS50886">
    <property type="entry name" value="TRBD"/>
    <property type="match status" value="1"/>
</dbReference>
<sequence>MSQRRLFVTTALPYANGNFHIGHIMEYIQADIWVRYQRMQGNAVNFVGADDAHGAPIMIAAEKAGKTPQQFVADIASGRKPYLDGFHISFDNWSSTDSPENHELARQIYRDLRDNPQGSLIETKTIEQFFDPEKNMFLPDRFIKGECPKCHAKDQYGDNCEVCGAVYAPTDLINPYSALSGVTPVLKSSEHFFFKLSDARCVEFLESWTQDGKLQPEVANKVKEWFSVRENADGTQSEGLGDWDISRDAPYFGIEIPDAPGKYFYVWLDAPVGYLASLKNLLDRRGESYDDYMADPKLEQYHFIGKDIVTFHTLFWPAMLHFSGRKTPDNIFVHGFLTVNNGEKMSKSRGTGLDPLKYLSLGMNPEWLRYYLAAKLNARNEDIDFNADDFMARVNSDLVGKFINIASRAAGFLTKRFDGKIGDASGDFPNPDGQGYPSLAISEIGACAAEISELYEQRELGKAMRKIMEIADGLNSDWDAAQPWKLAKSEEPQQLARLQRICSNTIEGFRLLTLYLKPVLPALAIEVESFLKIDPLNFSDATKALPKGHPIGDYKHLMQRVDVKQLDALFEPPAQDTPAQAAIETVAPGGEDIAPAITIDDFAKVDLRIAKIVNCEAVEGSTKLLRLTLDAGEGRMRNVFSGIASSYRPADLIGKHTVLVANLAPRKMKFGISEGMVLAASHADEKSNPGIYVLEPLPGATPGMRIH</sequence>
<keyword id="KW-0030">Aminoacyl-tRNA synthetase</keyword>
<keyword id="KW-0067">ATP-binding</keyword>
<keyword id="KW-0963">Cytoplasm</keyword>
<keyword id="KW-0436">Ligase</keyword>
<keyword id="KW-0479">Metal-binding</keyword>
<keyword id="KW-0547">Nucleotide-binding</keyword>
<keyword id="KW-0648">Protein biosynthesis</keyword>
<keyword id="KW-1185">Reference proteome</keyword>
<keyword id="KW-0694">RNA-binding</keyword>
<keyword id="KW-0820">tRNA-binding</keyword>
<keyword id="KW-0862">Zinc</keyword>
<name>SYM_POLNA</name>
<protein>
    <recommendedName>
        <fullName evidence="1">Methionine--tRNA ligase</fullName>
        <ecNumber evidence="1">6.1.1.10</ecNumber>
    </recommendedName>
    <alternativeName>
        <fullName evidence="1">Methionyl-tRNA synthetase</fullName>
        <shortName evidence="1">MetRS</shortName>
    </alternativeName>
</protein>
<gene>
    <name evidence="1" type="primary">metG</name>
    <name type="ordered locus">Pnap_0818</name>
</gene>
<accession>A1VKF9</accession>
<reference key="1">
    <citation type="journal article" date="2009" name="Environ. Microbiol.">
        <title>The genome of Polaromonas naphthalenivorans strain CJ2, isolated from coal tar-contaminated sediment, reveals physiological and metabolic versatility and evolution through extensive horizontal gene transfer.</title>
        <authorList>
            <person name="Yagi J.M."/>
            <person name="Sims D."/>
            <person name="Brettin T."/>
            <person name="Bruce D."/>
            <person name="Madsen E.L."/>
        </authorList>
    </citation>
    <scope>NUCLEOTIDE SEQUENCE [LARGE SCALE GENOMIC DNA]</scope>
    <source>
        <strain>CJ2</strain>
    </source>
</reference>
<feature type="chain" id="PRO_0000331862" description="Methionine--tRNA ligase">
    <location>
        <begin position="1"/>
        <end position="707"/>
    </location>
</feature>
<feature type="domain" description="tRNA-binding" evidence="1">
    <location>
        <begin position="601"/>
        <end position="707"/>
    </location>
</feature>
<feature type="short sequence motif" description="'HIGH' region">
    <location>
        <begin position="13"/>
        <end position="23"/>
    </location>
</feature>
<feature type="short sequence motif" description="'KMSKS' region">
    <location>
        <begin position="344"/>
        <end position="348"/>
    </location>
</feature>
<feature type="binding site" evidence="1">
    <location>
        <position position="147"/>
    </location>
    <ligand>
        <name>Zn(2+)</name>
        <dbReference type="ChEBI" id="CHEBI:29105"/>
    </ligand>
</feature>
<feature type="binding site" evidence="1">
    <location>
        <position position="150"/>
    </location>
    <ligand>
        <name>Zn(2+)</name>
        <dbReference type="ChEBI" id="CHEBI:29105"/>
    </ligand>
</feature>
<feature type="binding site" evidence="1">
    <location>
        <position position="160"/>
    </location>
    <ligand>
        <name>Zn(2+)</name>
        <dbReference type="ChEBI" id="CHEBI:29105"/>
    </ligand>
</feature>
<feature type="binding site" evidence="1">
    <location>
        <position position="163"/>
    </location>
    <ligand>
        <name>Zn(2+)</name>
        <dbReference type="ChEBI" id="CHEBI:29105"/>
    </ligand>
</feature>
<feature type="binding site" evidence="1">
    <location>
        <position position="347"/>
    </location>
    <ligand>
        <name>ATP</name>
        <dbReference type="ChEBI" id="CHEBI:30616"/>
    </ligand>
</feature>
<organism>
    <name type="scientific">Polaromonas naphthalenivorans (strain CJ2)</name>
    <dbReference type="NCBI Taxonomy" id="365044"/>
    <lineage>
        <taxon>Bacteria</taxon>
        <taxon>Pseudomonadati</taxon>
        <taxon>Pseudomonadota</taxon>
        <taxon>Betaproteobacteria</taxon>
        <taxon>Burkholderiales</taxon>
        <taxon>Comamonadaceae</taxon>
        <taxon>Polaromonas</taxon>
    </lineage>
</organism>